<comment type="function">
    <text evidence="1">Bidirectionally degrades single-stranded DNA into large acid-insoluble oligonucleotides, which are then degraded further into small acid-soluble oligonucleotides.</text>
</comment>
<comment type="catalytic activity">
    <reaction evidence="1">
        <text>Exonucleolytic cleavage in either 5'- to 3'- or 3'- to 5'-direction to yield nucleoside 5'-phosphates.</text>
        <dbReference type="EC" id="3.1.11.6"/>
    </reaction>
</comment>
<comment type="subunit">
    <text evidence="1">Heterooligomer composed of large and small subunits.</text>
</comment>
<comment type="subcellular location">
    <subcellularLocation>
        <location evidence="1">Cytoplasm</location>
    </subcellularLocation>
</comment>
<comment type="similarity">
    <text evidence="1">Belongs to the XseB family.</text>
</comment>
<proteinExistence type="inferred from homology"/>
<keyword id="KW-0963">Cytoplasm</keyword>
<keyword id="KW-0269">Exonuclease</keyword>
<keyword id="KW-0378">Hydrolase</keyword>
<keyword id="KW-0540">Nuclease</keyword>
<keyword id="KW-1185">Reference proteome</keyword>
<organism>
    <name type="scientific">Acidothermus cellulolyticus (strain ATCC 43068 / DSM 8971 / 11B)</name>
    <dbReference type="NCBI Taxonomy" id="351607"/>
    <lineage>
        <taxon>Bacteria</taxon>
        <taxon>Bacillati</taxon>
        <taxon>Actinomycetota</taxon>
        <taxon>Actinomycetes</taxon>
        <taxon>Acidothermales</taxon>
        <taxon>Acidothermaceae</taxon>
        <taxon>Acidothermus</taxon>
    </lineage>
</organism>
<dbReference type="EC" id="3.1.11.6" evidence="1"/>
<dbReference type="EMBL" id="CP000481">
    <property type="protein sequence ID" value="ABK53648.1"/>
    <property type="molecule type" value="Genomic_DNA"/>
</dbReference>
<dbReference type="RefSeq" id="WP_011720711.1">
    <property type="nucleotide sequence ID" value="NC_008578.1"/>
</dbReference>
<dbReference type="SMR" id="A0LW38"/>
<dbReference type="FunCoup" id="A0LW38">
    <property type="interactions" value="2"/>
</dbReference>
<dbReference type="STRING" id="351607.Acel_1876"/>
<dbReference type="KEGG" id="ace:Acel_1876"/>
<dbReference type="eggNOG" id="COG1722">
    <property type="taxonomic scope" value="Bacteria"/>
</dbReference>
<dbReference type="HOGENOM" id="CLU_145918_0_2_11"/>
<dbReference type="InParanoid" id="A0LW38"/>
<dbReference type="OrthoDB" id="5244334at2"/>
<dbReference type="Proteomes" id="UP000008221">
    <property type="component" value="Chromosome"/>
</dbReference>
<dbReference type="GO" id="GO:0005829">
    <property type="term" value="C:cytosol"/>
    <property type="evidence" value="ECO:0007669"/>
    <property type="project" value="TreeGrafter"/>
</dbReference>
<dbReference type="GO" id="GO:0009318">
    <property type="term" value="C:exodeoxyribonuclease VII complex"/>
    <property type="evidence" value="ECO:0007669"/>
    <property type="project" value="InterPro"/>
</dbReference>
<dbReference type="GO" id="GO:0008855">
    <property type="term" value="F:exodeoxyribonuclease VII activity"/>
    <property type="evidence" value="ECO:0007669"/>
    <property type="project" value="UniProtKB-UniRule"/>
</dbReference>
<dbReference type="GO" id="GO:0006308">
    <property type="term" value="P:DNA catabolic process"/>
    <property type="evidence" value="ECO:0007669"/>
    <property type="project" value="UniProtKB-UniRule"/>
</dbReference>
<dbReference type="Gene3D" id="1.10.287.1040">
    <property type="entry name" value="Exonuclease VII, small subunit"/>
    <property type="match status" value="1"/>
</dbReference>
<dbReference type="HAMAP" id="MF_00337">
    <property type="entry name" value="Exonuc_7_S"/>
    <property type="match status" value="1"/>
</dbReference>
<dbReference type="InterPro" id="IPR003761">
    <property type="entry name" value="Exonuc_VII_S"/>
</dbReference>
<dbReference type="InterPro" id="IPR037004">
    <property type="entry name" value="Exonuc_VII_ssu_sf"/>
</dbReference>
<dbReference type="NCBIfam" id="NF002139">
    <property type="entry name" value="PRK00977.1-3"/>
    <property type="match status" value="1"/>
</dbReference>
<dbReference type="NCBIfam" id="TIGR01280">
    <property type="entry name" value="xseB"/>
    <property type="match status" value="1"/>
</dbReference>
<dbReference type="PANTHER" id="PTHR34137">
    <property type="entry name" value="EXODEOXYRIBONUCLEASE 7 SMALL SUBUNIT"/>
    <property type="match status" value="1"/>
</dbReference>
<dbReference type="PANTHER" id="PTHR34137:SF1">
    <property type="entry name" value="EXODEOXYRIBONUCLEASE 7 SMALL SUBUNIT"/>
    <property type="match status" value="1"/>
</dbReference>
<dbReference type="Pfam" id="PF02609">
    <property type="entry name" value="Exonuc_VII_S"/>
    <property type="match status" value="1"/>
</dbReference>
<dbReference type="SUPFAM" id="SSF116842">
    <property type="entry name" value="XseB-like"/>
    <property type="match status" value="1"/>
</dbReference>
<sequence length="96" mass="10716">MTEPPLPHESADDGRARLSYEDARDELIQIVQRLELGGLPLEEALRLWERGEELARVCQAWLDGARARLEAYRAPEQSAANDVSAPGSAEEHDHGR</sequence>
<feature type="chain" id="PRO_0000303682" description="Exodeoxyribonuclease 7 small subunit">
    <location>
        <begin position="1"/>
        <end position="96"/>
    </location>
</feature>
<feature type="region of interest" description="Disordered" evidence="2">
    <location>
        <begin position="73"/>
        <end position="96"/>
    </location>
</feature>
<reference key="1">
    <citation type="journal article" date="2009" name="Genome Res.">
        <title>Complete genome of the cellulolytic thermophile Acidothermus cellulolyticus 11B provides insights into its ecophysiological and evolutionary adaptations.</title>
        <authorList>
            <person name="Barabote R.D."/>
            <person name="Xie G."/>
            <person name="Leu D.H."/>
            <person name="Normand P."/>
            <person name="Necsulea A."/>
            <person name="Daubin V."/>
            <person name="Medigue C."/>
            <person name="Adney W.S."/>
            <person name="Xu X.C."/>
            <person name="Lapidus A."/>
            <person name="Parales R.E."/>
            <person name="Detter C."/>
            <person name="Pujic P."/>
            <person name="Bruce D."/>
            <person name="Lavire C."/>
            <person name="Challacombe J.F."/>
            <person name="Brettin T.S."/>
            <person name="Berry A.M."/>
        </authorList>
    </citation>
    <scope>NUCLEOTIDE SEQUENCE [LARGE SCALE GENOMIC DNA]</scope>
    <source>
        <strain>ATCC 43068 / DSM 8971 / 11B</strain>
    </source>
</reference>
<evidence type="ECO:0000255" key="1">
    <source>
        <dbReference type="HAMAP-Rule" id="MF_00337"/>
    </source>
</evidence>
<evidence type="ECO:0000256" key="2">
    <source>
        <dbReference type="SAM" id="MobiDB-lite"/>
    </source>
</evidence>
<name>EX7S_ACIC1</name>
<protein>
    <recommendedName>
        <fullName evidence="1">Exodeoxyribonuclease 7 small subunit</fullName>
        <ecNumber evidence="1">3.1.11.6</ecNumber>
    </recommendedName>
    <alternativeName>
        <fullName evidence="1">Exodeoxyribonuclease VII small subunit</fullName>
        <shortName evidence="1">Exonuclease VII small subunit</shortName>
    </alternativeName>
</protein>
<accession>A0LW38</accession>
<gene>
    <name evidence="1" type="primary">xseB</name>
    <name type="ordered locus">Acel_1876</name>
</gene>